<sequence>MQQYCELVRRFYAEIGSGDLGYVPDALRCVLKALDEVAANDALPSSVREQAAYAAANLLVSDYVDE</sequence>
<accession>Q1CAL3</accession>
<proteinExistence type="inferred from homology"/>
<organism>
    <name type="scientific">Yersinia pestis bv. Antiqua (strain Antiqua)</name>
    <dbReference type="NCBI Taxonomy" id="360102"/>
    <lineage>
        <taxon>Bacteria</taxon>
        <taxon>Pseudomonadati</taxon>
        <taxon>Pseudomonadota</taxon>
        <taxon>Gammaproteobacteria</taxon>
        <taxon>Enterobacterales</taxon>
        <taxon>Yersiniaceae</taxon>
        <taxon>Yersinia</taxon>
    </lineage>
</organism>
<name>Y541_YERPA</name>
<comment type="similarity">
    <text evidence="1">Belongs to the UPF0253 family.</text>
</comment>
<reference key="1">
    <citation type="journal article" date="2006" name="J. Bacteriol.">
        <title>Complete genome sequence of Yersinia pestis strains Antiqua and Nepal516: evidence of gene reduction in an emerging pathogen.</title>
        <authorList>
            <person name="Chain P.S.G."/>
            <person name="Hu P."/>
            <person name="Malfatti S.A."/>
            <person name="Radnedge L."/>
            <person name="Larimer F."/>
            <person name="Vergez L.M."/>
            <person name="Worsham P."/>
            <person name="Chu M.C."/>
            <person name="Andersen G.L."/>
        </authorList>
    </citation>
    <scope>NUCLEOTIDE SEQUENCE [LARGE SCALE GENOMIC DNA]</scope>
    <source>
        <strain>Antiqua</strain>
    </source>
</reference>
<feature type="chain" id="PRO_0000277528" description="UPF0253 protein YPA_0541">
    <location>
        <begin position="1"/>
        <end position="66"/>
    </location>
</feature>
<protein>
    <recommendedName>
        <fullName evidence="1">UPF0253 protein YPA_0541</fullName>
    </recommendedName>
</protein>
<evidence type="ECO:0000255" key="1">
    <source>
        <dbReference type="HAMAP-Rule" id="MF_01064"/>
    </source>
</evidence>
<gene>
    <name type="ordered locus">YPA_0541</name>
</gene>
<dbReference type="EMBL" id="CP000308">
    <property type="protein sequence ID" value="ABG12509.1"/>
    <property type="molecule type" value="Genomic_DNA"/>
</dbReference>
<dbReference type="RefSeq" id="WP_002212152.1">
    <property type="nucleotide sequence ID" value="NZ_CP009906.1"/>
</dbReference>
<dbReference type="SMR" id="Q1CAL3"/>
<dbReference type="KEGG" id="ypa:YPA_0541"/>
<dbReference type="Proteomes" id="UP000001971">
    <property type="component" value="Chromosome"/>
</dbReference>
<dbReference type="HAMAP" id="MF_01064">
    <property type="entry name" value="UPF0253"/>
    <property type="match status" value="1"/>
</dbReference>
<dbReference type="InterPro" id="IPR009624">
    <property type="entry name" value="UPF0253"/>
</dbReference>
<dbReference type="NCBIfam" id="NF003436">
    <property type="entry name" value="PRK04964.1"/>
    <property type="match status" value="1"/>
</dbReference>
<dbReference type="Pfam" id="PF06786">
    <property type="entry name" value="UPF0253"/>
    <property type="match status" value="1"/>
</dbReference>